<reference key="1">
    <citation type="submission" date="1998-04" db="EMBL/GenBank/DDBJ databases">
        <title>Analysis of a cotton actin gene.</title>
        <authorList>
            <person name="Song P."/>
            <person name="Allen R.D."/>
        </authorList>
    </citation>
    <scope>NUCLEOTIDE SEQUENCE [GENOMIC DNA]</scope>
</reference>
<feature type="chain" id="PRO_0000088945" description="Actin">
    <location>
        <begin position="1"/>
        <end position="377"/>
    </location>
</feature>
<dbReference type="EC" id="3.6.4.-" evidence="2"/>
<dbReference type="EMBL" id="AF059484">
    <property type="protein sequence ID" value="AAC31886.1"/>
    <property type="molecule type" value="Genomic_DNA"/>
</dbReference>
<dbReference type="PIR" id="T51175">
    <property type="entry name" value="T51175"/>
</dbReference>
<dbReference type="RefSeq" id="XP_016719934.1">
    <property type="nucleotide sequence ID" value="XM_016864445.2"/>
</dbReference>
<dbReference type="RefSeq" id="XP_016743829.1">
    <property type="nucleotide sequence ID" value="XM_016888340.2"/>
</dbReference>
<dbReference type="SMR" id="O81221"/>
<dbReference type="STRING" id="3635.O81221"/>
<dbReference type="PaxDb" id="3635-O81221"/>
<dbReference type="GeneID" id="107932458"/>
<dbReference type="GeneID" id="107953109"/>
<dbReference type="KEGG" id="ghi:107932458"/>
<dbReference type="KEGG" id="ghi:107953109"/>
<dbReference type="OMA" id="FEIEMNT"/>
<dbReference type="OrthoDB" id="7677at41938"/>
<dbReference type="Proteomes" id="UP000189702">
    <property type="component" value="Chromosome 9"/>
</dbReference>
<dbReference type="GO" id="GO:0015629">
    <property type="term" value="C:actin cytoskeleton"/>
    <property type="evidence" value="ECO:0000318"/>
    <property type="project" value="GO_Central"/>
</dbReference>
<dbReference type="GO" id="GO:0005737">
    <property type="term" value="C:cytoplasm"/>
    <property type="evidence" value="ECO:0007669"/>
    <property type="project" value="UniProtKB-KW"/>
</dbReference>
<dbReference type="GO" id="GO:0005524">
    <property type="term" value="F:ATP binding"/>
    <property type="evidence" value="ECO:0007669"/>
    <property type="project" value="UniProtKB-KW"/>
</dbReference>
<dbReference type="GO" id="GO:0016787">
    <property type="term" value="F:hydrolase activity"/>
    <property type="evidence" value="ECO:0007669"/>
    <property type="project" value="UniProtKB-KW"/>
</dbReference>
<dbReference type="CDD" id="cd10224">
    <property type="entry name" value="ASKHA_NBD_actin"/>
    <property type="match status" value="1"/>
</dbReference>
<dbReference type="FunFam" id="2.30.36.70:FF:000001">
    <property type="entry name" value="Actin, alpha skeletal muscle"/>
    <property type="match status" value="1"/>
</dbReference>
<dbReference type="FunFam" id="3.30.420.40:FF:000291">
    <property type="entry name" value="Actin, alpha skeletal muscle"/>
    <property type="match status" value="1"/>
</dbReference>
<dbReference type="FunFam" id="3.90.640.10:FF:000001">
    <property type="entry name" value="Actin, muscle"/>
    <property type="match status" value="1"/>
</dbReference>
<dbReference type="FunFam" id="3.30.420.40:FF:000404">
    <property type="entry name" value="Major actin"/>
    <property type="match status" value="1"/>
</dbReference>
<dbReference type="FunFam" id="3.30.420.40:FF:000058">
    <property type="entry name" value="Putative actin-related protein 5"/>
    <property type="match status" value="1"/>
</dbReference>
<dbReference type="Gene3D" id="3.30.420.40">
    <property type="match status" value="2"/>
</dbReference>
<dbReference type="Gene3D" id="3.90.640.10">
    <property type="entry name" value="Actin, Chain A, domain 4"/>
    <property type="match status" value="1"/>
</dbReference>
<dbReference type="InterPro" id="IPR004000">
    <property type="entry name" value="Actin"/>
</dbReference>
<dbReference type="InterPro" id="IPR020902">
    <property type="entry name" value="Actin/actin-like_CS"/>
</dbReference>
<dbReference type="InterPro" id="IPR004001">
    <property type="entry name" value="Actin_CS"/>
</dbReference>
<dbReference type="InterPro" id="IPR043129">
    <property type="entry name" value="ATPase_NBD"/>
</dbReference>
<dbReference type="PANTHER" id="PTHR11937">
    <property type="entry name" value="ACTIN"/>
    <property type="match status" value="1"/>
</dbReference>
<dbReference type="Pfam" id="PF00022">
    <property type="entry name" value="Actin"/>
    <property type="match status" value="1"/>
</dbReference>
<dbReference type="PRINTS" id="PR00190">
    <property type="entry name" value="ACTIN"/>
</dbReference>
<dbReference type="SMART" id="SM00268">
    <property type="entry name" value="ACTIN"/>
    <property type="match status" value="1"/>
</dbReference>
<dbReference type="SUPFAM" id="SSF53067">
    <property type="entry name" value="Actin-like ATPase domain"/>
    <property type="match status" value="2"/>
</dbReference>
<dbReference type="PROSITE" id="PS00406">
    <property type="entry name" value="ACTINS_1"/>
    <property type="match status" value="1"/>
</dbReference>
<dbReference type="PROSITE" id="PS00432">
    <property type="entry name" value="ACTINS_2"/>
    <property type="match status" value="1"/>
</dbReference>
<dbReference type="PROSITE" id="PS01132">
    <property type="entry name" value="ACTINS_ACT_LIKE"/>
    <property type="match status" value="1"/>
</dbReference>
<proteinExistence type="inferred from homology"/>
<sequence>MADGEDIQPLVCDNGTGMVKAGFAGDDAPRAVFPSIVGRPRHTGVMVGMGQKDAYVGDEAQSKRGILTLKYPIEHGIVNNWDDMEKIWHHTFYNELRVAPEEHPVLLTEAPLNPKANREKMTQIMFETFNAPAMYVAIQAVLSLYASGRTTGIVLDSGDGVSHTVPIYEGYALPHAILRLDLAGRDLTDALMKILTERGYSFTTTAEREIVRDVKEKLAYIALDYEQELETSKTSSSIEKSYELPDGQVITIGAERFRCPEVLFQPSMIGMEAAGIHETTYNSIMKCDVDIRKDLYGNIVLSGGTTMFPGIADRMSKEITALAPSSMKIKVVAPPERKYSVWIGGSILASLSTFQQMWIAKAEYDESGPSIVHRKCF</sequence>
<accession>O81221</accession>
<name>ACT_GOSHI</name>
<organism>
    <name type="scientific">Gossypium hirsutum</name>
    <name type="common">Upland cotton</name>
    <name type="synonym">Gossypium mexicanum</name>
    <dbReference type="NCBI Taxonomy" id="3635"/>
    <lineage>
        <taxon>Eukaryota</taxon>
        <taxon>Viridiplantae</taxon>
        <taxon>Streptophyta</taxon>
        <taxon>Embryophyta</taxon>
        <taxon>Tracheophyta</taxon>
        <taxon>Spermatophyta</taxon>
        <taxon>Magnoliopsida</taxon>
        <taxon>eudicotyledons</taxon>
        <taxon>Gunneridae</taxon>
        <taxon>Pentapetalae</taxon>
        <taxon>rosids</taxon>
        <taxon>malvids</taxon>
        <taxon>Malvales</taxon>
        <taxon>Malvaceae</taxon>
        <taxon>Malvoideae</taxon>
        <taxon>Gossypium</taxon>
    </lineage>
</organism>
<keyword id="KW-0067">ATP-binding</keyword>
<keyword id="KW-0963">Cytoplasm</keyword>
<keyword id="KW-0206">Cytoskeleton</keyword>
<keyword id="KW-0378">Hydrolase</keyword>
<keyword id="KW-0547">Nucleotide-binding</keyword>
<keyword id="KW-1185">Reference proteome</keyword>
<evidence type="ECO:0000250" key="1"/>
<evidence type="ECO:0000250" key="2">
    <source>
        <dbReference type="UniProtKB" id="P68137"/>
    </source>
</evidence>
<evidence type="ECO:0000305" key="3"/>
<protein>
    <recommendedName>
        <fullName>Actin</fullName>
        <ecNumber evidence="2">3.6.4.-</ecNumber>
    </recommendedName>
</protein>
<comment type="function">
    <text evidence="1">Actins are highly conserved proteins that are involved in various types of cell motility and are ubiquitously expressed in all eukaryotic cells.</text>
</comment>
<comment type="catalytic activity">
    <reaction evidence="2">
        <text>ATP + H2O = ADP + phosphate + H(+)</text>
        <dbReference type="Rhea" id="RHEA:13065"/>
        <dbReference type="ChEBI" id="CHEBI:15377"/>
        <dbReference type="ChEBI" id="CHEBI:15378"/>
        <dbReference type="ChEBI" id="CHEBI:30616"/>
        <dbReference type="ChEBI" id="CHEBI:43474"/>
        <dbReference type="ChEBI" id="CHEBI:456216"/>
    </reaction>
</comment>
<comment type="subcellular location">
    <subcellularLocation>
        <location>Cytoplasm</location>
        <location>Cytoskeleton</location>
    </subcellularLocation>
</comment>
<comment type="similarity">
    <text evidence="3">Belongs to the actin family.</text>
</comment>